<protein>
    <recommendedName>
        <fullName evidence="1">Proteasome subunit beta 2</fullName>
        <ecNumber evidence="1">3.4.25.1</ecNumber>
    </recommendedName>
    <alternativeName>
        <fullName evidence="1">20S proteasome beta subunit 2</fullName>
    </alternativeName>
    <alternativeName>
        <fullName evidence="1">Proteasome core protein PsmB 2</fullName>
    </alternativeName>
</protein>
<comment type="function">
    <text evidence="1">Component of the proteasome core, a large protease complex with broad specificity involved in protein degradation.</text>
</comment>
<comment type="catalytic activity">
    <reaction evidence="1">
        <text>Cleavage of peptide bonds with very broad specificity.</text>
        <dbReference type="EC" id="3.4.25.1"/>
    </reaction>
</comment>
<comment type="activity regulation">
    <text evidence="1">The formation of the proteasomal ATPase PAN-20S proteasome complex, via the docking of the C-termini of PAN into the intersubunit pockets in the alpha-rings, triggers opening of the gate for substrate entry. Interconversion between the open-gate and close-gate conformations leads to a dynamic regulation of the 20S proteasome proteolysis activity.</text>
</comment>
<comment type="subunit">
    <text evidence="1">The 20S proteasome core is composed of 14 alpha and 14 beta subunits that assemble into four stacked heptameric rings, resulting in a barrel-shaped structure. The two inner rings, each composed of seven catalytic beta subunits, are sandwiched by two outer rings, each composed of seven alpha subunits. The catalytic chamber with the active sites is on the inside of the barrel. Has a gated structure, the ends of the cylinder being occluded by the N-termini of the alpha-subunits. Is capped at one or both ends by the proteasome regulatory ATPase, PAN.</text>
</comment>
<comment type="subcellular location">
    <subcellularLocation>
        <location evidence="1">Cytoplasm</location>
    </subcellularLocation>
</comment>
<comment type="similarity">
    <text evidence="1">Belongs to the peptidase T1B family.</text>
</comment>
<name>PSB2_SACI3</name>
<sequence>MEELPATAIGLKVNDGIVLASERRLSYGGYVLSKQAKKVHKIGKFLMAGAGIYGDLQTLTRIMNVEIKYYEISTGKPISVHAAAKLLSVILYQYKVMPFISEILFGGVDEKGPQLYVLDPIGSLIEDNYAAVGSGARIAIGVLESEYDPNMNLDIAAQLITKAIKASIERDITSGDGIDLAIMDKKGNYENKFIPY</sequence>
<proteinExistence type="inferred from homology"/>
<gene>
    <name evidence="1" type="primary">psmB2</name>
    <name type="ordered locus">M1627_1941</name>
</gene>
<reference key="1">
    <citation type="journal article" date="2009" name="Proc. Natl. Acad. Sci. U.S.A.">
        <title>Biogeography of the Sulfolobus islandicus pan-genome.</title>
        <authorList>
            <person name="Reno M.L."/>
            <person name="Held N.L."/>
            <person name="Fields C.J."/>
            <person name="Burke P.V."/>
            <person name="Whitaker R.J."/>
        </authorList>
    </citation>
    <scope>NUCLEOTIDE SEQUENCE [LARGE SCALE GENOMIC DNA]</scope>
    <source>
        <strain>M.16.27</strain>
    </source>
</reference>
<accession>C3MZI0</accession>
<dbReference type="EC" id="3.4.25.1" evidence="1"/>
<dbReference type="EMBL" id="CP001401">
    <property type="protein sequence ID" value="ACP55812.1"/>
    <property type="molecule type" value="Genomic_DNA"/>
</dbReference>
<dbReference type="SMR" id="C3MZI0"/>
<dbReference type="KEGG" id="sim:M1627_1941"/>
<dbReference type="HOGENOM" id="CLU_035750_7_2_2"/>
<dbReference type="Proteomes" id="UP000002307">
    <property type="component" value="Chromosome"/>
</dbReference>
<dbReference type="GO" id="GO:0005737">
    <property type="term" value="C:cytoplasm"/>
    <property type="evidence" value="ECO:0007669"/>
    <property type="project" value="UniProtKB-SubCell"/>
</dbReference>
<dbReference type="GO" id="GO:0019774">
    <property type="term" value="C:proteasome core complex, beta-subunit complex"/>
    <property type="evidence" value="ECO:0007669"/>
    <property type="project" value="UniProtKB-UniRule"/>
</dbReference>
<dbReference type="GO" id="GO:0004298">
    <property type="term" value="F:threonine-type endopeptidase activity"/>
    <property type="evidence" value="ECO:0007669"/>
    <property type="project" value="UniProtKB-UniRule"/>
</dbReference>
<dbReference type="GO" id="GO:0010498">
    <property type="term" value="P:proteasomal protein catabolic process"/>
    <property type="evidence" value="ECO:0007669"/>
    <property type="project" value="UniProtKB-UniRule"/>
</dbReference>
<dbReference type="FunFam" id="3.60.20.10:FF:000079">
    <property type="entry name" value="Proteasome subunit beta 2"/>
    <property type="match status" value="1"/>
</dbReference>
<dbReference type="Gene3D" id="3.60.20.10">
    <property type="entry name" value="Glutamine Phosphoribosylpyrophosphate, subunit 1, domain 1"/>
    <property type="match status" value="1"/>
</dbReference>
<dbReference type="HAMAP" id="MF_02113_A">
    <property type="entry name" value="Proteasome_B_A"/>
    <property type="match status" value="1"/>
</dbReference>
<dbReference type="InterPro" id="IPR029055">
    <property type="entry name" value="Ntn_hydrolases_N"/>
</dbReference>
<dbReference type="InterPro" id="IPR019983">
    <property type="entry name" value="Pept_T1A_Psome_bsu_arc"/>
</dbReference>
<dbReference type="InterPro" id="IPR000243">
    <property type="entry name" value="Pept_T1A_subB"/>
</dbReference>
<dbReference type="InterPro" id="IPR016050">
    <property type="entry name" value="Proteasome_bsu_CS"/>
</dbReference>
<dbReference type="InterPro" id="IPR001353">
    <property type="entry name" value="Proteasome_sua/b"/>
</dbReference>
<dbReference type="InterPro" id="IPR023333">
    <property type="entry name" value="Proteasome_suB-type"/>
</dbReference>
<dbReference type="NCBIfam" id="TIGR03634">
    <property type="entry name" value="arc_protsome_B"/>
    <property type="match status" value="1"/>
</dbReference>
<dbReference type="PANTHER" id="PTHR32194:SF0">
    <property type="entry name" value="ATP-DEPENDENT PROTEASE SUBUNIT HSLV"/>
    <property type="match status" value="1"/>
</dbReference>
<dbReference type="PANTHER" id="PTHR32194">
    <property type="entry name" value="METALLOPROTEASE TLDD"/>
    <property type="match status" value="1"/>
</dbReference>
<dbReference type="Pfam" id="PF00227">
    <property type="entry name" value="Proteasome"/>
    <property type="match status" value="1"/>
</dbReference>
<dbReference type="PRINTS" id="PR00141">
    <property type="entry name" value="PROTEASOME"/>
</dbReference>
<dbReference type="SUPFAM" id="SSF56235">
    <property type="entry name" value="N-terminal nucleophile aminohydrolases (Ntn hydrolases)"/>
    <property type="match status" value="1"/>
</dbReference>
<dbReference type="PROSITE" id="PS00854">
    <property type="entry name" value="PROTEASOME_BETA_1"/>
    <property type="match status" value="1"/>
</dbReference>
<dbReference type="PROSITE" id="PS51476">
    <property type="entry name" value="PROTEASOME_BETA_2"/>
    <property type="match status" value="1"/>
</dbReference>
<keyword id="KW-0068">Autocatalytic cleavage</keyword>
<keyword id="KW-0963">Cytoplasm</keyword>
<keyword id="KW-0378">Hydrolase</keyword>
<keyword id="KW-0645">Protease</keyword>
<keyword id="KW-0647">Proteasome</keyword>
<keyword id="KW-0888">Threonine protease</keyword>
<keyword id="KW-0865">Zymogen</keyword>
<evidence type="ECO:0000255" key="1">
    <source>
        <dbReference type="HAMAP-Rule" id="MF_02113"/>
    </source>
</evidence>
<feature type="propeptide" id="PRO_0000397438" description="Removed in mature form; by autocatalysis" evidence="1">
    <location>
        <begin position="1"/>
        <end position="6"/>
    </location>
</feature>
<feature type="chain" id="PRO_0000397439" description="Proteasome subunit beta 2">
    <location>
        <begin position="7"/>
        <end position="196"/>
    </location>
</feature>
<feature type="active site" description="Nucleophile" evidence="1">
    <location>
        <position position="7"/>
    </location>
</feature>
<organism>
    <name type="scientific">Saccharolobus islandicus (strain M.16.27)</name>
    <name type="common">Sulfolobus islandicus</name>
    <dbReference type="NCBI Taxonomy" id="427318"/>
    <lineage>
        <taxon>Archaea</taxon>
        <taxon>Thermoproteota</taxon>
        <taxon>Thermoprotei</taxon>
        <taxon>Sulfolobales</taxon>
        <taxon>Sulfolobaceae</taxon>
        <taxon>Saccharolobus</taxon>
    </lineage>
</organism>